<keyword id="KW-0963">Cytoplasm</keyword>
<keyword id="KW-0238">DNA-binding</keyword>
<keyword id="KW-1185">Reference proteome</keyword>
<keyword id="KW-0677">Repeat</keyword>
<keyword id="KW-0804">Transcription</keyword>
<keyword id="KW-0805">Transcription regulation</keyword>
<sequence length="155" mass="17713">MPGFIGREQHSVDEKGRLLIPARFRRRFLLQENDPATGAPSRSPVLYVFKADDGSLELYEPSVWSEKEQQLLKLSDFNPDERLLTTMIYARLDQTELDRSGRIALSREMLDHAGIVKDAVIIGANAKMTVWEPLRLERLLSDNASRFAPLANRYI</sequence>
<evidence type="ECO:0000255" key="1">
    <source>
        <dbReference type="HAMAP-Rule" id="MF_01008"/>
    </source>
</evidence>
<evidence type="ECO:0000255" key="2">
    <source>
        <dbReference type="PROSITE-ProRule" id="PRU01076"/>
    </source>
</evidence>
<organism>
    <name type="scientific">Chlorobaculum tepidum (strain ATCC 49652 / DSM 12025 / NBRC 103806 / TLS)</name>
    <name type="common">Chlorobium tepidum</name>
    <dbReference type="NCBI Taxonomy" id="194439"/>
    <lineage>
        <taxon>Bacteria</taxon>
        <taxon>Pseudomonadati</taxon>
        <taxon>Chlorobiota</taxon>
        <taxon>Chlorobiia</taxon>
        <taxon>Chlorobiales</taxon>
        <taxon>Chlorobiaceae</taxon>
        <taxon>Chlorobaculum</taxon>
    </lineage>
</organism>
<name>MRAZ_CHLTE</name>
<accession>Q8KGC5</accession>
<proteinExistence type="inferred from homology"/>
<protein>
    <recommendedName>
        <fullName>Transcriptional regulator MraZ</fullName>
    </recommendedName>
</protein>
<reference key="1">
    <citation type="journal article" date="2002" name="Proc. Natl. Acad. Sci. U.S.A.">
        <title>The complete genome sequence of Chlorobium tepidum TLS, a photosynthetic, anaerobic, green-sulfur bacterium.</title>
        <authorList>
            <person name="Eisen J.A."/>
            <person name="Nelson K.E."/>
            <person name="Paulsen I.T."/>
            <person name="Heidelberg J.F."/>
            <person name="Wu M."/>
            <person name="Dodson R.J."/>
            <person name="DeBoy R.T."/>
            <person name="Gwinn M.L."/>
            <person name="Nelson W.C."/>
            <person name="Haft D.H."/>
            <person name="Hickey E.K."/>
            <person name="Peterson J.D."/>
            <person name="Durkin A.S."/>
            <person name="Kolonay J.F."/>
            <person name="Yang F."/>
            <person name="Holt I.E."/>
            <person name="Umayam L.A."/>
            <person name="Mason T.M."/>
            <person name="Brenner M."/>
            <person name="Shea T.P."/>
            <person name="Parksey D.S."/>
            <person name="Nierman W.C."/>
            <person name="Feldblyum T.V."/>
            <person name="Hansen C.L."/>
            <person name="Craven M.B."/>
            <person name="Radune D."/>
            <person name="Vamathevan J.J."/>
            <person name="Khouri H.M."/>
            <person name="White O."/>
            <person name="Gruber T.M."/>
            <person name="Ketchum K.A."/>
            <person name="Venter J.C."/>
            <person name="Tettelin H."/>
            <person name="Bryant D.A."/>
            <person name="Fraser C.M."/>
        </authorList>
    </citation>
    <scope>NUCLEOTIDE SEQUENCE [LARGE SCALE GENOMIC DNA]</scope>
    <source>
        <strain>ATCC 49652 / DSM 12025 / NBRC 103806 / TLS</strain>
    </source>
</reference>
<gene>
    <name evidence="1" type="primary">mraZ</name>
    <name type="ordered locus">CT0043</name>
</gene>
<dbReference type="EMBL" id="AE006470">
    <property type="protein sequence ID" value="AAM71291.1"/>
    <property type="molecule type" value="Genomic_DNA"/>
</dbReference>
<dbReference type="RefSeq" id="NP_660949.1">
    <property type="nucleotide sequence ID" value="NC_002932.3"/>
</dbReference>
<dbReference type="RefSeq" id="WP_010931737.1">
    <property type="nucleotide sequence ID" value="NC_002932.3"/>
</dbReference>
<dbReference type="SMR" id="Q8KGC5"/>
<dbReference type="STRING" id="194439.CT0043"/>
<dbReference type="EnsemblBacteria" id="AAM71291">
    <property type="protein sequence ID" value="AAM71291"/>
    <property type="gene ID" value="CT0043"/>
</dbReference>
<dbReference type="KEGG" id="cte:CT0043"/>
<dbReference type="PATRIC" id="fig|194439.7.peg.42"/>
<dbReference type="eggNOG" id="COG2001">
    <property type="taxonomic scope" value="Bacteria"/>
</dbReference>
<dbReference type="HOGENOM" id="CLU_107907_0_5_10"/>
<dbReference type="OrthoDB" id="9807753at2"/>
<dbReference type="Proteomes" id="UP000001007">
    <property type="component" value="Chromosome"/>
</dbReference>
<dbReference type="GO" id="GO:0005737">
    <property type="term" value="C:cytoplasm"/>
    <property type="evidence" value="ECO:0007669"/>
    <property type="project" value="UniProtKB-UniRule"/>
</dbReference>
<dbReference type="GO" id="GO:0009295">
    <property type="term" value="C:nucleoid"/>
    <property type="evidence" value="ECO:0007669"/>
    <property type="project" value="UniProtKB-SubCell"/>
</dbReference>
<dbReference type="GO" id="GO:0003700">
    <property type="term" value="F:DNA-binding transcription factor activity"/>
    <property type="evidence" value="ECO:0007669"/>
    <property type="project" value="UniProtKB-UniRule"/>
</dbReference>
<dbReference type="GO" id="GO:0000976">
    <property type="term" value="F:transcription cis-regulatory region binding"/>
    <property type="evidence" value="ECO:0007669"/>
    <property type="project" value="TreeGrafter"/>
</dbReference>
<dbReference type="GO" id="GO:2000143">
    <property type="term" value="P:negative regulation of DNA-templated transcription initiation"/>
    <property type="evidence" value="ECO:0007669"/>
    <property type="project" value="TreeGrafter"/>
</dbReference>
<dbReference type="CDD" id="cd16321">
    <property type="entry name" value="MraZ_C"/>
    <property type="match status" value="1"/>
</dbReference>
<dbReference type="CDD" id="cd16320">
    <property type="entry name" value="MraZ_N"/>
    <property type="match status" value="1"/>
</dbReference>
<dbReference type="Gene3D" id="3.40.1550.20">
    <property type="entry name" value="Transcriptional regulator MraZ domain"/>
    <property type="match status" value="1"/>
</dbReference>
<dbReference type="HAMAP" id="MF_01008">
    <property type="entry name" value="MraZ"/>
    <property type="match status" value="1"/>
</dbReference>
<dbReference type="InterPro" id="IPR003444">
    <property type="entry name" value="MraZ"/>
</dbReference>
<dbReference type="InterPro" id="IPR035644">
    <property type="entry name" value="MraZ_C"/>
</dbReference>
<dbReference type="InterPro" id="IPR020603">
    <property type="entry name" value="MraZ_dom"/>
</dbReference>
<dbReference type="InterPro" id="IPR035642">
    <property type="entry name" value="MraZ_N"/>
</dbReference>
<dbReference type="InterPro" id="IPR038619">
    <property type="entry name" value="MraZ_sf"/>
</dbReference>
<dbReference type="InterPro" id="IPR007159">
    <property type="entry name" value="SpoVT-AbrB_dom"/>
</dbReference>
<dbReference type="InterPro" id="IPR037914">
    <property type="entry name" value="SpoVT-AbrB_sf"/>
</dbReference>
<dbReference type="NCBIfam" id="NF001476">
    <property type="entry name" value="PRK00326.2-2"/>
    <property type="match status" value="1"/>
</dbReference>
<dbReference type="PANTHER" id="PTHR34701">
    <property type="entry name" value="TRANSCRIPTIONAL REGULATOR MRAZ"/>
    <property type="match status" value="1"/>
</dbReference>
<dbReference type="PANTHER" id="PTHR34701:SF1">
    <property type="entry name" value="TRANSCRIPTIONAL REGULATOR MRAZ"/>
    <property type="match status" value="1"/>
</dbReference>
<dbReference type="Pfam" id="PF02381">
    <property type="entry name" value="MraZ"/>
    <property type="match status" value="2"/>
</dbReference>
<dbReference type="SUPFAM" id="SSF89447">
    <property type="entry name" value="AbrB/MazE/MraZ-like"/>
    <property type="match status" value="1"/>
</dbReference>
<dbReference type="PROSITE" id="PS51740">
    <property type="entry name" value="SPOVT_ABRB"/>
    <property type="match status" value="2"/>
</dbReference>
<comment type="subunit">
    <text evidence="1">Forms oligomers.</text>
</comment>
<comment type="subcellular location">
    <subcellularLocation>
        <location evidence="1">Cytoplasm</location>
        <location evidence="1">Nucleoid</location>
    </subcellularLocation>
</comment>
<comment type="similarity">
    <text evidence="1">Belongs to the MraZ family.</text>
</comment>
<feature type="chain" id="PRO_0000108468" description="Transcriptional regulator MraZ">
    <location>
        <begin position="1"/>
        <end position="155"/>
    </location>
</feature>
<feature type="domain" description="SpoVT-AbrB 1" evidence="2">
    <location>
        <begin position="7"/>
        <end position="63"/>
    </location>
</feature>
<feature type="domain" description="SpoVT-AbrB 2" evidence="2">
    <location>
        <begin position="92"/>
        <end position="135"/>
    </location>
</feature>